<organism>
    <name type="scientific">Lactiplantibacillus plantarum (strain ATCC BAA-793 / NCIMB 8826 / WCFS1)</name>
    <name type="common">Lactobacillus plantarum</name>
    <dbReference type="NCBI Taxonomy" id="220668"/>
    <lineage>
        <taxon>Bacteria</taxon>
        <taxon>Bacillati</taxon>
        <taxon>Bacillota</taxon>
        <taxon>Bacilli</taxon>
        <taxon>Lactobacillales</taxon>
        <taxon>Lactobacillaceae</taxon>
        <taxon>Lactiplantibacillus</taxon>
    </lineage>
</organism>
<accession>Q88V41</accession>
<accession>F9UQG5</accession>
<feature type="chain" id="PRO_0000107571" description="Acetate kinase">
    <location>
        <begin position="1"/>
        <end position="397"/>
    </location>
</feature>
<feature type="active site" description="Proton donor/acceptor" evidence="1">
    <location>
        <position position="147"/>
    </location>
</feature>
<feature type="binding site" evidence="1">
    <location>
        <position position="8"/>
    </location>
    <ligand>
        <name>Mg(2+)</name>
        <dbReference type="ChEBI" id="CHEBI:18420"/>
    </ligand>
</feature>
<feature type="binding site" evidence="1">
    <location>
        <position position="15"/>
    </location>
    <ligand>
        <name>ATP</name>
        <dbReference type="ChEBI" id="CHEBI:30616"/>
    </ligand>
</feature>
<feature type="binding site" evidence="1">
    <location>
        <position position="90"/>
    </location>
    <ligand>
        <name>substrate</name>
    </ligand>
</feature>
<feature type="binding site" evidence="1">
    <location>
        <begin position="207"/>
        <end position="211"/>
    </location>
    <ligand>
        <name>ATP</name>
        <dbReference type="ChEBI" id="CHEBI:30616"/>
    </ligand>
</feature>
<feature type="binding site" evidence="1">
    <location>
        <position position="382"/>
    </location>
    <ligand>
        <name>Mg(2+)</name>
        <dbReference type="ChEBI" id="CHEBI:18420"/>
    </ligand>
</feature>
<feature type="site" description="Transition state stabilizer" evidence="1">
    <location>
        <position position="179"/>
    </location>
</feature>
<feature type="site" description="Transition state stabilizer" evidence="1">
    <location>
        <position position="240"/>
    </location>
</feature>
<proteinExistence type="inferred from homology"/>
<evidence type="ECO:0000255" key="1">
    <source>
        <dbReference type="HAMAP-Rule" id="MF_00020"/>
    </source>
</evidence>
<keyword id="KW-0067">ATP-binding</keyword>
<keyword id="KW-0963">Cytoplasm</keyword>
<keyword id="KW-0418">Kinase</keyword>
<keyword id="KW-0460">Magnesium</keyword>
<keyword id="KW-0479">Metal-binding</keyword>
<keyword id="KW-0547">Nucleotide-binding</keyword>
<keyword id="KW-1185">Reference proteome</keyword>
<keyword id="KW-0808">Transferase</keyword>
<dbReference type="EC" id="2.7.2.1" evidence="1"/>
<dbReference type="EMBL" id="AL935263">
    <property type="protein sequence ID" value="CCC79454.1"/>
    <property type="molecule type" value="Genomic_DNA"/>
</dbReference>
<dbReference type="RefSeq" id="WP_003645437.1">
    <property type="nucleotide sequence ID" value="NC_004567.2"/>
</dbReference>
<dbReference type="RefSeq" id="YP_004889968.1">
    <property type="nucleotide sequence ID" value="NC_004567.2"/>
</dbReference>
<dbReference type="SMR" id="Q88V41"/>
<dbReference type="STRING" id="220668.lp_2242"/>
<dbReference type="EnsemblBacteria" id="CCC79454">
    <property type="protein sequence ID" value="CCC79454"/>
    <property type="gene ID" value="lp_2242"/>
</dbReference>
<dbReference type="KEGG" id="lpl:lp_2242"/>
<dbReference type="PATRIC" id="fig|220668.9.peg.1896"/>
<dbReference type="eggNOG" id="COG0282">
    <property type="taxonomic scope" value="Bacteria"/>
</dbReference>
<dbReference type="HOGENOM" id="CLU_020352_0_1_9"/>
<dbReference type="OrthoDB" id="9802453at2"/>
<dbReference type="PhylomeDB" id="Q88V41"/>
<dbReference type="UniPathway" id="UPA00340">
    <property type="reaction ID" value="UER00458"/>
</dbReference>
<dbReference type="Proteomes" id="UP000000432">
    <property type="component" value="Chromosome"/>
</dbReference>
<dbReference type="GO" id="GO:0005737">
    <property type="term" value="C:cytoplasm"/>
    <property type="evidence" value="ECO:0007669"/>
    <property type="project" value="UniProtKB-SubCell"/>
</dbReference>
<dbReference type="GO" id="GO:0008776">
    <property type="term" value="F:acetate kinase activity"/>
    <property type="evidence" value="ECO:0007669"/>
    <property type="project" value="UniProtKB-UniRule"/>
</dbReference>
<dbReference type="GO" id="GO:0005524">
    <property type="term" value="F:ATP binding"/>
    <property type="evidence" value="ECO:0007669"/>
    <property type="project" value="UniProtKB-KW"/>
</dbReference>
<dbReference type="GO" id="GO:0000287">
    <property type="term" value="F:magnesium ion binding"/>
    <property type="evidence" value="ECO:0007669"/>
    <property type="project" value="UniProtKB-UniRule"/>
</dbReference>
<dbReference type="GO" id="GO:0006083">
    <property type="term" value="P:acetate metabolic process"/>
    <property type="evidence" value="ECO:0007669"/>
    <property type="project" value="TreeGrafter"/>
</dbReference>
<dbReference type="GO" id="GO:0006085">
    <property type="term" value="P:acetyl-CoA biosynthetic process"/>
    <property type="evidence" value="ECO:0007669"/>
    <property type="project" value="UniProtKB-UniRule"/>
</dbReference>
<dbReference type="CDD" id="cd24010">
    <property type="entry name" value="ASKHA_NBD_AcK_PK"/>
    <property type="match status" value="1"/>
</dbReference>
<dbReference type="Gene3D" id="3.30.420.40">
    <property type="match status" value="2"/>
</dbReference>
<dbReference type="HAMAP" id="MF_00020">
    <property type="entry name" value="Acetate_kinase"/>
    <property type="match status" value="1"/>
</dbReference>
<dbReference type="InterPro" id="IPR004372">
    <property type="entry name" value="Ac/propionate_kinase"/>
</dbReference>
<dbReference type="InterPro" id="IPR000890">
    <property type="entry name" value="Aliphatic_acid_kin_short-chain"/>
</dbReference>
<dbReference type="InterPro" id="IPR023865">
    <property type="entry name" value="Aliphatic_acid_kinase_CS"/>
</dbReference>
<dbReference type="InterPro" id="IPR043129">
    <property type="entry name" value="ATPase_NBD"/>
</dbReference>
<dbReference type="NCBIfam" id="TIGR00016">
    <property type="entry name" value="ackA"/>
    <property type="match status" value="1"/>
</dbReference>
<dbReference type="PANTHER" id="PTHR21060">
    <property type="entry name" value="ACETATE KINASE"/>
    <property type="match status" value="1"/>
</dbReference>
<dbReference type="PANTHER" id="PTHR21060:SF15">
    <property type="entry name" value="ACETATE KINASE-RELATED"/>
    <property type="match status" value="1"/>
</dbReference>
<dbReference type="Pfam" id="PF00871">
    <property type="entry name" value="Acetate_kinase"/>
    <property type="match status" value="1"/>
</dbReference>
<dbReference type="PIRSF" id="PIRSF000722">
    <property type="entry name" value="Acetate_prop_kin"/>
    <property type="match status" value="1"/>
</dbReference>
<dbReference type="PRINTS" id="PR00471">
    <property type="entry name" value="ACETATEKNASE"/>
</dbReference>
<dbReference type="SUPFAM" id="SSF53067">
    <property type="entry name" value="Actin-like ATPase domain"/>
    <property type="match status" value="2"/>
</dbReference>
<dbReference type="PROSITE" id="PS01075">
    <property type="entry name" value="ACETATE_KINASE_1"/>
    <property type="match status" value="1"/>
</dbReference>
<dbReference type="PROSITE" id="PS01076">
    <property type="entry name" value="ACETATE_KINASE_2"/>
    <property type="match status" value="1"/>
</dbReference>
<comment type="function">
    <text evidence="1">Catalyzes the formation of acetyl phosphate from acetate and ATP. Can also catalyze the reverse reaction.</text>
</comment>
<comment type="catalytic activity">
    <reaction evidence="1">
        <text>acetate + ATP = acetyl phosphate + ADP</text>
        <dbReference type="Rhea" id="RHEA:11352"/>
        <dbReference type="ChEBI" id="CHEBI:22191"/>
        <dbReference type="ChEBI" id="CHEBI:30089"/>
        <dbReference type="ChEBI" id="CHEBI:30616"/>
        <dbReference type="ChEBI" id="CHEBI:456216"/>
        <dbReference type="EC" id="2.7.2.1"/>
    </reaction>
</comment>
<comment type="cofactor">
    <cofactor evidence="1">
        <name>Mg(2+)</name>
        <dbReference type="ChEBI" id="CHEBI:18420"/>
    </cofactor>
    <cofactor evidence="1">
        <name>Mn(2+)</name>
        <dbReference type="ChEBI" id="CHEBI:29035"/>
    </cofactor>
    <text evidence="1">Mg(2+). Can also accept Mn(2+).</text>
</comment>
<comment type="pathway">
    <text evidence="1">Metabolic intermediate biosynthesis; acetyl-CoA biosynthesis; acetyl-CoA from acetate: step 1/2.</text>
</comment>
<comment type="subunit">
    <text evidence="1">Homodimer.</text>
</comment>
<comment type="subcellular location">
    <subcellularLocation>
        <location evidence="1">Cytoplasm</location>
    </subcellularLocation>
</comment>
<comment type="similarity">
    <text evidence="1">Belongs to the acetokinase family.</text>
</comment>
<gene>
    <name evidence="1" type="primary">ackA</name>
    <name type="ordered locus">lp_2242</name>
</gene>
<name>ACKA_LACPL</name>
<sequence>MGKTIAINAGSSTLKFKLFEMPQERVIAQGAVERIGFKTSPVNIRYGVDHHYQEKAVVADHLAAVNIVLDELIKLRIIDSYDEITGVGHRVVAGGEQFHDSVLITDQVLKQITDLAEYAPLHNPANAVGIRAFKRVLPHVPAVAVFDTAFHASMPAVNYLYSLPYDYYQRYGARKFGAHGTSHRYVAVRAAKLLGRPLETLKLITLHLGAGSSITAIDHGQSLDTSMGFTPLAGITMATRSGDVDPSLVAYLMKKLNISDPDEMLTILNTQSGLLGLAGSADMQELEARYDEDSQAQLAIDIFVNRIVKYVGAYLAELQGADALVITAGIGERDARMRQRIADRLTYFGVAIDPTKNQVSGVERDLSTTDAKIRTLLIPTDEELMIARDVERVAQNQ</sequence>
<protein>
    <recommendedName>
        <fullName evidence="1">Acetate kinase</fullName>
        <ecNumber evidence="1">2.7.2.1</ecNumber>
    </recommendedName>
    <alternativeName>
        <fullName evidence="1">Acetokinase</fullName>
    </alternativeName>
</protein>
<reference key="1">
    <citation type="journal article" date="2003" name="Proc. Natl. Acad. Sci. U.S.A.">
        <title>Complete genome sequence of Lactobacillus plantarum WCFS1.</title>
        <authorList>
            <person name="Kleerebezem M."/>
            <person name="Boekhorst J."/>
            <person name="van Kranenburg R."/>
            <person name="Molenaar D."/>
            <person name="Kuipers O.P."/>
            <person name="Leer R."/>
            <person name="Tarchini R."/>
            <person name="Peters S.A."/>
            <person name="Sandbrink H.M."/>
            <person name="Fiers M.W.E.J."/>
            <person name="Stiekema W."/>
            <person name="Klein Lankhorst R.M."/>
            <person name="Bron P.A."/>
            <person name="Hoffer S.M."/>
            <person name="Nierop Groot M.N."/>
            <person name="Kerkhoven R."/>
            <person name="De Vries M."/>
            <person name="Ursing B."/>
            <person name="De Vos W.M."/>
            <person name="Siezen R.J."/>
        </authorList>
    </citation>
    <scope>NUCLEOTIDE SEQUENCE [LARGE SCALE GENOMIC DNA]</scope>
    <source>
        <strain>ATCC BAA-793 / NCIMB 8826 / WCFS1</strain>
    </source>
</reference>
<reference key="2">
    <citation type="journal article" date="2012" name="J. Bacteriol.">
        <title>Complete resequencing and reannotation of the Lactobacillus plantarum WCFS1 genome.</title>
        <authorList>
            <person name="Siezen R.J."/>
            <person name="Francke C."/>
            <person name="Renckens B."/>
            <person name="Boekhorst J."/>
            <person name="Wels M."/>
            <person name="Kleerebezem M."/>
            <person name="van Hijum S.A."/>
        </authorList>
    </citation>
    <scope>NUCLEOTIDE SEQUENCE [LARGE SCALE GENOMIC DNA]</scope>
    <scope>GENOME REANNOTATION</scope>
    <source>
        <strain>ATCC BAA-793 / NCIMB 8826 / WCFS1</strain>
    </source>
</reference>